<dbReference type="EC" id="5.3.3.2" evidence="1"/>
<dbReference type="EMBL" id="CP000849">
    <property type="protein sequence ID" value="ABV79289.1"/>
    <property type="molecule type" value="Genomic_DNA"/>
</dbReference>
<dbReference type="RefSeq" id="WP_012151952.1">
    <property type="nucleotide sequence ID" value="NC_009883.1"/>
</dbReference>
<dbReference type="SMR" id="A8GWR2"/>
<dbReference type="KEGG" id="rbo:A1I_04760"/>
<dbReference type="HOGENOM" id="CLU_065515_1_0_5"/>
<dbReference type="GO" id="GO:0005737">
    <property type="term" value="C:cytoplasm"/>
    <property type="evidence" value="ECO:0007669"/>
    <property type="project" value="UniProtKB-SubCell"/>
</dbReference>
<dbReference type="GO" id="GO:0010181">
    <property type="term" value="F:FMN binding"/>
    <property type="evidence" value="ECO:0007669"/>
    <property type="project" value="UniProtKB-UniRule"/>
</dbReference>
<dbReference type="GO" id="GO:0004452">
    <property type="term" value="F:isopentenyl-diphosphate delta-isomerase activity"/>
    <property type="evidence" value="ECO:0007669"/>
    <property type="project" value="UniProtKB-UniRule"/>
</dbReference>
<dbReference type="GO" id="GO:0000287">
    <property type="term" value="F:magnesium ion binding"/>
    <property type="evidence" value="ECO:0007669"/>
    <property type="project" value="UniProtKB-UniRule"/>
</dbReference>
<dbReference type="GO" id="GO:0070402">
    <property type="term" value="F:NADPH binding"/>
    <property type="evidence" value="ECO:0007669"/>
    <property type="project" value="UniProtKB-UniRule"/>
</dbReference>
<dbReference type="GO" id="GO:0016491">
    <property type="term" value="F:oxidoreductase activity"/>
    <property type="evidence" value="ECO:0007669"/>
    <property type="project" value="InterPro"/>
</dbReference>
<dbReference type="GO" id="GO:0008299">
    <property type="term" value="P:isoprenoid biosynthetic process"/>
    <property type="evidence" value="ECO:0007669"/>
    <property type="project" value="UniProtKB-UniRule"/>
</dbReference>
<dbReference type="CDD" id="cd02811">
    <property type="entry name" value="IDI-2_FMN"/>
    <property type="match status" value="1"/>
</dbReference>
<dbReference type="Gene3D" id="3.20.20.70">
    <property type="entry name" value="Aldolase class I"/>
    <property type="match status" value="1"/>
</dbReference>
<dbReference type="HAMAP" id="MF_00354">
    <property type="entry name" value="Idi_2"/>
    <property type="match status" value="1"/>
</dbReference>
<dbReference type="InterPro" id="IPR013785">
    <property type="entry name" value="Aldolase_TIM"/>
</dbReference>
<dbReference type="InterPro" id="IPR000262">
    <property type="entry name" value="FMN-dep_DH"/>
</dbReference>
<dbReference type="InterPro" id="IPR011179">
    <property type="entry name" value="IPdP_isomerase"/>
</dbReference>
<dbReference type="NCBIfam" id="TIGR02151">
    <property type="entry name" value="IPP_isom_2"/>
    <property type="match status" value="1"/>
</dbReference>
<dbReference type="PANTHER" id="PTHR43665">
    <property type="entry name" value="ISOPENTENYL-DIPHOSPHATE DELTA-ISOMERASE"/>
    <property type="match status" value="1"/>
</dbReference>
<dbReference type="PANTHER" id="PTHR43665:SF1">
    <property type="entry name" value="ISOPENTENYL-DIPHOSPHATE DELTA-ISOMERASE"/>
    <property type="match status" value="1"/>
</dbReference>
<dbReference type="Pfam" id="PF01070">
    <property type="entry name" value="FMN_dh"/>
    <property type="match status" value="2"/>
</dbReference>
<dbReference type="PIRSF" id="PIRSF003314">
    <property type="entry name" value="IPP_isomerase"/>
    <property type="match status" value="1"/>
</dbReference>
<dbReference type="SUPFAM" id="SSF51395">
    <property type="entry name" value="FMN-linked oxidoreductases"/>
    <property type="match status" value="1"/>
</dbReference>
<feature type="chain" id="PRO_1000048454" description="Isopentenyl-diphosphate delta-isomerase">
    <location>
        <begin position="1"/>
        <end position="343"/>
    </location>
</feature>
<feature type="binding site" evidence="1">
    <location>
        <begin position="6"/>
        <end position="7"/>
    </location>
    <ligand>
        <name>substrate</name>
    </ligand>
</feature>
<feature type="binding site" evidence="1">
    <location>
        <position position="63"/>
    </location>
    <ligand>
        <name>FMN</name>
        <dbReference type="ChEBI" id="CHEBI:58210"/>
    </ligand>
</feature>
<feature type="binding site" evidence="1">
    <location>
        <begin position="64"/>
        <end position="66"/>
    </location>
    <ligand>
        <name>FMN</name>
        <dbReference type="ChEBI" id="CHEBI:58210"/>
    </ligand>
</feature>
<feature type="binding site" evidence="1">
    <location>
        <begin position="94"/>
        <end position="96"/>
    </location>
    <ligand>
        <name>substrate</name>
    </ligand>
</feature>
<feature type="binding site" evidence="1">
    <location>
        <position position="94"/>
    </location>
    <ligand>
        <name>FMN</name>
        <dbReference type="ChEBI" id="CHEBI:58210"/>
    </ligand>
</feature>
<feature type="binding site" evidence="1">
    <location>
        <position position="122"/>
    </location>
    <ligand>
        <name>FMN</name>
        <dbReference type="ChEBI" id="CHEBI:58210"/>
    </ligand>
</feature>
<feature type="binding site" evidence="1">
    <location>
        <position position="157"/>
    </location>
    <ligand>
        <name>substrate</name>
    </ligand>
</feature>
<feature type="binding site" evidence="1">
    <location>
        <position position="158"/>
    </location>
    <ligand>
        <name>Mg(2+)</name>
        <dbReference type="ChEBI" id="CHEBI:18420"/>
    </ligand>
</feature>
<feature type="binding site" evidence="1">
    <location>
        <position position="189"/>
    </location>
    <ligand>
        <name>FMN</name>
        <dbReference type="ChEBI" id="CHEBI:58210"/>
    </ligand>
</feature>
<feature type="binding site" evidence="1">
    <location>
        <position position="219"/>
    </location>
    <ligand>
        <name>FMN</name>
        <dbReference type="ChEBI" id="CHEBI:58210"/>
    </ligand>
</feature>
<feature type="binding site" evidence="1">
    <location>
        <begin position="269"/>
        <end position="271"/>
    </location>
    <ligand>
        <name>FMN</name>
        <dbReference type="ChEBI" id="CHEBI:58210"/>
    </ligand>
</feature>
<feature type="binding site" evidence="1">
    <location>
        <begin position="290"/>
        <end position="291"/>
    </location>
    <ligand>
        <name>FMN</name>
        <dbReference type="ChEBI" id="CHEBI:58210"/>
    </ligand>
</feature>
<sequence>MLDIKRKQDHIEINLTKNVESGLSSGFESVQFVHNALPEINYSSIDTTTTFLNKILQAPILISSMTGGTPRARDINCRLAAAAQKAGIAMGLGSMRTLLTEPSTLDTFTVRNNAPDIVLLANIGAVQLNYGVTPKQCQYLVDSVKADALILHLNVLQELTQPEGDKNWENLLPKIKEVVNYLSVPVIIKEVGFGLSKKTAKQFIDIGVKILDVAGSGGTSWSQVEAYRATNSLQNRIASSFINWGIPTLDSLKMVREASKDISVIASGGLKSGIDGAKAIRMGADIFGLAGPFLKAADVSENLVSEEIQLIIEQLKITMMCTGSHTINNLKKAELRMNHIPLY</sequence>
<comment type="function">
    <text evidence="1">Involved in the biosynthesis of isoprenoids. Catalyzes the 1,3-allylic rearrangement of the homoallylic substrate isopentenyl (IPP) to its allylic isomer, dimethylallyl diphosphate (DMAPP).</text>
</comment>
<comment type="catalytic activity">
    <reaction evidence="1">
        <text>isopentenyl diphosphate = dimethylallyl diphosphate</text>
        <dbReference type="Rhea" id="RHEA:23284"/>
        <dbReference type="ChEBI" id="CHEBI:57623"/>
        <dbReference type="ChEBI" id="CHEBI:128769"/>
        <dbReference type="EC" id="5.3.3.2"/>
    </reaction>
</comment>
<comment type="cofactor">
    <cofactor evidence="1">
        <name>FMN</name>
        <dbReference type="ChEBI" id="CHEBI:58210"/>
    </cofactor>
</comment>
<comment type="cofactor">
    <cofactor evidence="1">
        <name>NADPH</name>
        <dbReference type="ChEBI" id="CHEBI:57783"/>
    </cofactor>
</comment>
<comment type="cofactor">
    <cofactor evidence="1">
        <name>Mg(2+)</name>
        <dbReference type="ChEBI" id="CHEBI:18420"/>
    </cofactor>
</comment>
<comment type="subunit">
    <text evidence="1">Homooctamer. Dimer of tetramers.</text>
</comment>
<comment type="subcellular location">
    <subcellularLocation>
        <location evidence="1">Cytoplasm</location>
    </subcellularLocation>
</comment>
<comment type="similarity">
    <text evidence="1">Belongs to the IPP isomerase type 2 family.</text>
</comment>
<accession>A8GWR2</accession>
<keyword id="KW-0963">Cytoplasm</keyword>
<keyword id="KW-0285">Flavoprotein</keyword>
<keyword id="KW-0288">FMN</keyword>
<keyword id="KW-0413">Isomerase</keyword>
<keyword id="KW-0414">Isoprene biosynthesis</keyword>
<keyword id="KW-0460">Magnesium</keyword>
<keyword id="KW-0479">Metal-binding</keyword>
<keyword id="KW-0521">NADP</keyword>
<protein>
    <recommendedName>
        <fullName evidence="1">Isopentenyl-diphosphate delta-isomerase</fullName>
        <shortName evidence="1">IPP isomerase</shortName>
        <ecNumber evidence="1">5.3.3.2</ecNumber>
    </recommendedName>
    <alternativeName>
        <fullName evidence="1">Isopentenyl diphosphate:dimethylallyl diphosphate isomerase</fullName>
    </alternativeName>
    <alternativeName>
        <fullName evidence="1">Isopentenyl pyrophosphate isomerase</fullName>
    </alternativeName>
    <alternativeName>
        <fullName evidence="1">Type 2 isopentenyl diphosphate isomerase</fullName>
        <shortName evidence="1">IDI-2</shortName>
    </alternativeName>
</protein>
<proteinExistence type="inferred from homology"/>
<reference key="1">
    <citation type="submission" date="2007-09" db="EMBL/GenBank/DDBJ databases">
        <title>Complete genome sequencing of Rickettsia bellii.</title>
        <authorList>
            <person name="Madan A."/>
            <person name="Lee H."/>
            <person name="Madan A."/>
            <person name="Yoon J.-G."/>
            <person name="Ryu G.-Y."/>
            <person name="Dasch G."/>
            <person name="Ereemeva M."/>
        </authorList>
    </citation>
    <scope>NUCLEOTIDE SEQUENCE [LARGE SCALE GENOMIC DNA]</scope>
    <source>
        <strain>OSU 85-389</strain>
    </source>
</reference>
<evidence type="ECO:0000255" key="1">
    <source>
        <dbReference type="HAMAP-Rule" id="MF_00354"/>
    </source>
</evidence>
<gene>
    <name evidence="1" type="primary">fni</name>
    <name type="ordered locus">A1I_04760</name>
</gene>
<organism>
    <name type="scientific">Rickettsia bellii (strain OSU 85-389)</name>
    <dbReference type="NCBI Taxonomy" id="391896"/>
    <lineage>
        <taxon>Bacteria</taxon>
        <taxon>Pseudomonadati</taxon>
        <taxon>Pseudomonadota</taxon>
        <taxon>Alphaproteobacteria</taxon>
        <taxon>Rickettsiales</taxon>
        <taxon>Rickettsiaceae</taxon>
        <taxon>Rickettsieae</taxon>
        <taxon>Rickettsia</taxon>
        <taxon>belli group</taxon>
    </lineage>
</organism>
<name>IDI2_RICB8</name>